<name>CLOCK_RAT</name>
<keyword id="KW-0010">Activator</keyword>
<keyword id="KW-0025">Alternative splicing</keyword>
<keyword id="KW-0090">Biological rhythms</keyword>
<keyword id="KW-0963">Cytoplasm</keyword>
<keyword id="KW-0227">DNA damage</keyword>
<keyword id="KW-0238">DNA-binding</keyword>
<keyword id="KW-1017">Isopeptide bond</keyword>
<keyword id="KW-0539">Nucleus</keyword>
<keyword id="KW-0597">Phosphoprotein</keyword>
<keyword id="KW-1185">Reference proteome</keyword>
<keyword id="KW-0677">Repeat</keyword>
<keyword id="KW-0804">Transcription</keyword>
<keyword id="KW-0805">Transcription regulation</keyword>
<keyword id="KW-0808">Transferase</keyword>
<keyword id="KW-0832">Ubl conjugation</keyword>
<organism>
    <name type="scientific">Rattus norvegicus</name>
    <name type="common">Rat</name>
    <dbReference type="NCBI Taxonomy" id="10116"/>
    <lineage>
        <taxon>Eukaryota</taxon>
        <taxon>Metazoa</taxon>
        <taxon>Chordata</taxon>
        <taxon>Craniata</taxon>
        <taxon>Vertebrata</taxon>
        <taxon>Euteleostomi</taxon>
        <taxon>Mammalia</taxon>
        <taxon>Eutheria</taxon>
        <taxon>Euarchontoglires</taxon>
        <taxon>Glires</taxon>
        <taxon>Rodentia</taxon>
        <taxon>Myomorpha</taxon>
        <taxon>Muroidea</taxon>
        <taxon>Muridae</taxon>
        <taxon>Murinae</taxon>
        <taxon>Rattus</taxon>
    </lineage>
</organism>
<accession>Q9WVS9</accession>
<accession>Q920Y1</accession>
<evidence type="ECO:0000250" key="1"/>
<evidence type="ECO:0000250" key="2">
    <source>
        <dbReference type="UniProtKB" id="O08785"/>
    </source>
</evidence>
<evidence type="ECO:0000250" key="3">
    <source>
        <dbReference type="UniProtKB" id="O15516"/>
    </source>
</evidence>
<evidence type="ECO:0000255" key="4">
    <source>
        <dbReference type="PROSITE-ProRule" id="PRU00140"/>
    </source>
</evidence>
<evidence type="ECO:0000255" key="5">
    <source>
        <dbReference type="PROSITE-ProRule" id="PRU00981"/>
    </source>
</evidence>
<evidence type="ECO:0000256" key="6">
    <source>
        <dbReference type="SAM" id="MobiDB-lite"/>
    </source>
</evidence>
<evidence type="ECO:0000269" key="7">
    <source>
    </source>
</evidence>
<evidence type="ECO:0000303" key="8">
    <source>
    </source>
</evidence>
<proteinExistence type="evidence at transcript level"/>
<comment type="function">
    <text evidence="2 3">Transcriptional activator which forms a core component of the circadian clock. The circadian clock, an internal time-keeping system, regulates various physiological processes through the generation of approximately 24 hour circadian rhythms in gene expression, which are translated into rhythms in metabolism and behavior. It is derived from the Latin roots 'circa' (about) and 'diem' (day) and acts as an important regulator of a wide array of physiological functions including metabolism, sleep, body temperature, blood pressure, endocrine, immune, cardiovascular, and renal function. Consists of two major components: the central clock, residing in the suprachiasmatic nucleus (SCN) of the brain, and the peripheral clocks that are present in nearly every tissue and organ system. Both the central and peripheral clocks can be reset by environmental cues, also known as Zeitgebers (German for 'timegivers'). The predominant Zeitgeber for the central clock is light, which is sensed by retina and signals directly to the SCN. The central clock entrains the peripheral clocks through neuronal and hormonal signals, body temperature and feeding-related cues, aligning all clocks with the external light/dark cycle. Circadian rhythms allow an organism to achieve temporal homeostasis with its environment at the molecular level by regulating gene expression to create a peak of protein expression once every 24 hours to control when a particular physiological process is most active with respect to the solar day. Transcription and translation of core clock components (CLOCK, NPAS2, BMAL1, BMAL2, PER1, PER2, PER3, CRY1 and CRY2) plays a critical role in rhythm generation, whereas delays imposed by post-translational modifications (PTMs) are important for determining the period (tau) of the rhythms (tau refers to the period of a rhythm and is the length, in time, of one complete cycle). A diurnal rhythm is synchronized with the day/night cycle, while the ultradian and infradian rhythms have a period shorter and longer than 24 hours, respectively. Disruptions in the circadian rhythms contribute to the pathology of cardiovascular diseases, cancer, metabolic syndromes and aging. A transcription/translation feedback loop (TTFL) forms the core of the molecular circadian clock mechanism. Transcription factors, CLOCK or NPAS2 and BMAL1 or BMAL2, form the positive limb of the feedback loop, act in the form of a heterodimer and activate the transcription of core clock genes and clock-controlled genes (involved in key metabolic processes), harboring E-box elements (5'-CACGTG-3') within their promoters. The core clock genes: PER1/2/3 and CRY1/2 which are transcriptional repressors form the negative limb of the feedback loop and interact with the CLOCK|NPAS2-BMAL1|BMAL2 heterodimer inhibiting its activity and thereby negatively regulating their own expression. This heterodimer also activates nuclear receptors NR1D1/2 and RORA/B/G, which form a second feedback loop and which activate and repress BMAL1 transcription, respectively. Regulates the circadian expression of ICAM1, VCAM1, CCL2, THPO and MPL and also acts as an enhancer of the transactivation potential of NF-kappaB. Plays an important role in the homeostatic regulation of sleep. The CLOCK-BMAL1 heterodimer regulates the circadian expression of SERPINE1/PAI1, VWF, B3, CCRN4L/NOC, NAMPT, DBP, MYOD1, PPARGC1A, PPARGC1B, SIRT1, GYS2, F7, NGFR, GNRHR, BHLHE40/DEC1, ATF4, MTA1, KLF10 and also genes implicated in glucose and lipid metabolism. Promotes rhythmic chromatin opening, regulating the DNA accessibility of other transcription factors. The CLOCK-BMAL2 heterodimer activates the transcription of SERPINE1/PAI1 and BHLHE40/DEC1. The preferred binding motif for the CLOCK-BMAL1 heterodimer is 5'-CACGTGA-3', which contains a flanking adenine nucleotide at the 3-prime end of the canonical 6-nucleotide E-box sequence. CLOCK specifically binds to the half-site 5'-CAC-3', while BMAL1 binds to the half-site 5'-GTGA-3'. The CLOCK-BMAL1 heterodimer also recognizes the non-canonical E-box motifs 5'-AACGTGA-3' and 5'-CATGTGA-3'. CLOCK has an intrinsic acetyltransferase activity, which enables circadian chromatin remodeling by acetylating histones and nonhistone proteins, including its own partner BMAL1. Represses glucocorticoid receptor NR3C1/GR-induced transcriptional activity by reducing the association of NR3C1/GR to glucocorticoid response elements (GREs) via the acetylation of multiple lysine residues located in its hinge region. The acetyltransferase activity of CLOCK is as important as its transcription activity in circadian control. Acetylates metabolic enzymes IMPDH2 and NDUFA9 in a circadian manner. Facilitated by BMAL1, rhythmically interacts and acetylates argininosuccinate synthase 1 (ASS1) leading to enzymatic inhibition of ASS1 as well as the circadian oscillation of arginine biosynthesis and subsequent ureagenesis (By similarity). Drives the circadian rhythm of blood pressure through transcriptional activation of ATP1B1 (By similarity).</text>
</comment>
<comment type="catalytic activity">
    <reaction>
        <text>L-lysyl-[protein] + acetyl-CoA = N(6)-acetyl-L-lysyl-[protein] + CoA + H(+)</text>
        <dbReference type="Rhea" id="RHEA:45948"/>
        <dbReference type="Rhea" id="RHEA-COMP:9752"/>
        <dbReference type="Rhea" id="RHEA-COMP:10731"/>
        <dbReference type="ChEBI" id="CHEBI:15378"/>
        <dbReference type="ChEBI" id="CHEBI:29969"/>
        <dbReference type="ChEBI" id="CHEBI:57287"/>
        <dbReference type="ChEBI" id="CHEBI:57288"/>
        <dbReference type="ChEBI" id="CHEBI:61930"/>
        <dbReference type="EC" id="2.3.1.48"/>
    </reaction>
</comment>
<comment type="subunit">
    <text evidence="2 3">Component of the circadian clock oscillator which includes the CRY proteins, CLOCK or NPAS2, BMAL1 or BMAL2, CSNK1D and/or CSNK1E, TIMELESS and the PER proteins (By similarity). Forms a heterodimer with BMAL1 (By similarity). The CLOCK-BMAL1 heterodimer is required for E-box-dependent transactivation, for CLOCK nuclear translocation and degradation, and for phosphorylation of both CLOCK and BMAL1 (By similarity). Interacts with NR3C1 in a ligand-dependent fashion (By similarity). Interacts with ESR1 and estrogen stimulates this interaction (By similarity). Interacts with the complex p35/CDK5 (By similarity). Interacts with RELA/p65 (By similarity). Interacts with KAT2B, CREBBP and EP300 (By similarity). Interacts with ID1 and ID3 (By similarity). Interacts with ID2 (By similarity). Interacts with MTA1 (By similarity). Interacts with OGA (By similarity). Interacts with SIRT1 (By similarity). Interacts with CIPC (By similarity). Interacts with EZH2 (By similarity). Interacts with EIF4E, PIWIL1 and DDX4 (By similarity). Interacts with PER1, PER2, CRY1 and CRY2 and this interaction requires a translocation to the nucleus (By similarity). Interaction of the CLOCK-BMAL1 heterodimer with PER or CRY inhibits transcription activation (By similarity). Interaction of the CLOCK-BMAL1 with CRY1 is independent of DNA but with PER2 is off DNA (By similarity). The CLOCK-BMAL1 heterodimer interacts with GSK3B (By similarity). Interacts with KDM5A (By similarity). Interacts with KMT2A; in a circadian manner (By similarity). Interacts with MYBBP1A (By similarity). Interacts with THRAP3 (By similarity). Interacts with MED1; this interaction requires the presence of THRAP3 (By similarity). Interacts with NCOA2 (By similarity). The CLOCK-BMAL1 heterodimer interacts with PASD1. Interacts with ASS1 and IMPDH2; in a circadian manner. Interacts with NDUFA9 (By similarity). Interacts with PIWIL2 (via PIWI domain) (By similarity). Interacts with HNF4A (By similarity).</text>
</comment>
<comment type="subcellular location">
    <subcellularLocation>
        <location evidence="2">Cytoplasm</location>
    </subcellularLocation>
    <subcellularLocation>
        <location evidence="5">Nucleus</location>
    </subcellularLocation>
    <subcellularLocation>
        <location evidence="3">Cytoplasm</location>
        <location evidence="3">Cytosol</location>
    </subcellularLocation>
    <text evidence="2 3">Localizes to sites of DNA damage in a H2AX-independent manner. Shuttling between the cytoplasm and the nucleus is under circadian regulation and is BMAL1-dependent. Phosphorylated form located in the nucleus while the nonphosphorylated form found only in the cytoplasm. Sequestered to the cytoplasm in the presence of ID2.</text>
</comment>
<comment type="alternative products">
    <event type="alternative splicing"/>
    <isoform>
        <id>Q9WVS9-1</id>
        <name>1</name>
        <name>Long</name>
        <name>Clock-L</name>
        <sequence type="displayed"/>
    </isoform>
    <isoform>
        <id>Q9WVS9-2</id>
        <name>2</name>
        <name>Short</name>
        <name>Clock-S</name>
        <sequence type="described" ref="VSP_021795"/>
    </isoform>
</comment>
<comment type="tissue specificity">
    <text evidence="7">Expressed in the suprachiasmatic nucleus (SCN), and in the piriform cortex (PC).</text>
</comment>
<comment type="induction">
    <text evidence="7">Without light exposure, high levels at ZT6 and low levels at ZT18 and ZT22. Light exposure increases levels in the SCN in phase dependent manner. Levels increased significantly during the subjective night (ZT10-20). In the piriform cortex, levels increased by light at ZT14.</text>
</comment>
<comment type="PTM">
    <text evidence="2">Ubiquitinated, leading to its proteasomal degradation.</text>
</comment>
<comment type="PTM">
    <text evidence="2">O-glycosylated; contains O-GlcNAc. O-glycosylation by OGT prevents protein degradation by inhibiting ubiquitination. It also stabilizes the CLOCK-BMAL1 heterodimer thereby increasing CLOCK-BMAL1-mediated transcriptional activation of PER1/2/3 and CRY1/2.</text>
</comment>
<comment type="PTM">
    <text evidence="2">Phosphorylation is dependent on the CLOCK-BMAL1 heterodimer formation. Phosphorylation enhances the transcriptional activity, alters the subcellular localization and decreases the stability of the heterodimer by promoting its degradation. Phosphorylation shows circadian variations in the liver. May be phosphorylated by CSNK1D and CKSN1E.</text>
</comment>
<comment type="PTM">
    <text evidence="2">Sumoylation enhances its transcriptional activity and interaction with ESR1, resulting in up-regulation of ESR1 activity. Estrogen stimulates sumoylation. Desumoylation by SENP1 negatively regulates its transcriptional activity.</text>
</comment>
<comment type="PTM">
    <text evidence="2">Undergoes lysosome-mediated degradation in a time-dependent manner in the liver.</text>
</comment>
<gene>
    <name type="primary">Clock</name>
</gene>
<dbReference type="EC" id="2.3.1.48"/>
<dbReference type="EMBL" id="AB019258">
    <property type="protein sequence ID" value="BAA81819.1"/>
    <property type="molecule type" value="mRNA"/>
</dbReference>
<dbReference type="EMBL" id="AB019259">
    <property type="protein sequence ID" value="BAB68768.1"/>
    <property type="molecule type" value="mRNA"/>
</dbReference>
<dbReference type="RefSeq" id="NP_001276761.1">
    <property type="nucleotide sequence ID" value="NM_001289832.1"/>
</dbReference>
<dbReference type="RefSeq" id="NP_068628.1">
    <property type="nucleotide sequence ID" value="NM_021856.2"/>
</dbReference>
<dbReference type="SMR" id="Q9WVS9"/>
<dbReference type="FunCoup" id="Q9WVS9">
    <property type="interactions" value="2031"/>
</dbReference>
<dbReference type="STRING" id="10116.ENSRNOP00000002976"/>
<dbReference type="iPTMnet" id="Q9WVS9"/>
<dbReference type="PhosphoSitePlus" id="Q9WVS9"/>
<dbReference type="PaxDb" id="10116-ENSRNOP00000002976"/>
<dbReference type="PeptideAtlas" id="Q9WVS9"/>
<dbReference type="GeneID" id="60447"/>
<dbReference type="KEGG" id="rno:60447"/>
<dbReference type="UCSC" id="RGD:620271">
    <molecule id="Q9WVS9-1"/>
    <property type="organism name" value="rat"/>
</dbReference>
<dbReference type="AGR" id="RGD:620271"/>
<dbReference type="CTD" id="9575"/>
<dbReference type="RGD" id="620271">
    <property type="gene designation" value="Clock"/>
</dbReference>
<dbReference type="eggNOG" id="KOG3561">
    <property type="taxonomic scope" value="Eukaryota"/>
</dbReference>
<dbReference type="InParanoid" id="Q9WVS9"/>
<dbReference type="PhylomeDB" id="Q9WVS9"/>
<dbReference type="PRO" id="PR:Q9WVS9"/>
<dbReference type="Proteomes" id="UP000002494">
    <property type="component" value="Unplaced"/>
</dbReference>
<dbReference type="GO" id="GO:0033391">
    <property type="term" value="C:chromatoid body"/>
    <property type="evidence" value="ECO:0000250"/>
    <property type="project" value="UniProtKB"/>
</dbReference>
<dbReference type="GO" id="GO:0005694">
    <property type="term" value="C:chromosome"/>
    <property type="evidence" value="ECO:0000266"/>
    <property type="project" value="RGD"/>
</dbReference>
<dbReference type="GO" id="GO:1990513">
    <property type="term" value="C:CLOCK-BMAL transcription complex"/>
    <property type="evidence" value="ECO:0000266"/>
    <property type="project" value="RGD"/>
</dbReference>
<dbReference type="GO" id="GO:0005737">
    <property type="term" value="C:cytoplasm"/>
    <property type="evidence" value="ECO:0000266"/>
    <property type="project" value="RGD"/>
</dbReference>
<dbReference type="GO" id="GO:0005829">
    <property type="term" value="C:cytosol"/>
    <property type="evidence" value="ECO:0000250"/>
    <property type="project" value="UniProtKB"/>
</dbReference>
<dbReference type="GO" id="GO:0005634">
    <property type="term" value="C:nucleus"/>
    <property type="evidence" value="ECO:0000314"/>
    <property type="project" value="UniProtKB"/>
</dbReference>
<dbReference type="GO" id="GO:0005726">
    <property type="term" value="C:perichromatin fibrils"/>
    <property type="evidence" value="ECO:0000314"/>
    <property type="project" value="RGD"/>
</dbReference>
<dbReference type="GO" id="GO:0005667">
    <property type="term" value="C:transcription regulator complex"/>
    <property type="evidence" value="ECO:0000250"/>
    <property type="project" value="UniProtKB"/>
</dbReference>
<dbReference type="GO" id="GO:0031490">
    <property type="term" value="F:chromatin DNA binding"/>
    <property type="evidence" value="ECO:0000250"/>
    <property type="project" value="UniProtKB"/>
</dbReference>
<dbReference type="GO" id="GO:0003677">
    <property type="term" value="F:DNA binding"/>
    <property type="evidence" value="ECO:0000250"/>
    <property type="project" value="UniProtKB"/>
</dbReference>
<dbReference type="GO" id="GO:0001228">
    <property type="term" value="F:DNA-binding transcription activator activity, RNA polymerase II-specific"/>
    <property type="evidence" value="ECO:0000266"/>
    <property type="project" value="RGD"/>
</dbReference>
<dbReference type="GO" id="GO:0003700">
    <property type="term" value="F:DNA-binding transcription factor activity"/>
    <property type="evidence" value="ECO:0000250"/>
    <property type="project" value="UniProtKB"/>
</dbReference>
<dbReference type="GO" id="GO:0000981">
    <property type="term" value="F:DNA-binding transcription factor activity, RNA polymerase II-specific"/>
    <property type="evidence" value="ECO:0000266"/>
    <property type="project" value="RGD"/>
</dbReference>
<dbReference type="GO" id="GO:0070888">
    <property type="term" value="F:E-box binding"/>
    <property type="evidence" value="ECO:0000250"/>
    <property type="project" value="UniProtKB"/>
</dbReference>
<dbReference type="GO" id="GO:0004402">
    <property type="term" value="F:histone acetyltransferase activity"/>
    <property type="evidence" value="ECO:0000250"/>
    <property type="project" value="UniProtKB"/>
</dbReference>
<dbReference type="GO" id="GO:0046983">
    <property type="term" value="F:protein dimerization activity"/>
    <property type="evidence" value="ECO:0007669"/>
    <property type="project" value="InterPro"/>
</dbReference>
<dbReference type="GO" id="GO:0000978">
    <property type="term" value="F:RNA polymerase II cis-regulatory region sequence-specific DNA binding"/>
    <property type="evidence" value="ECO:0000250"/>
    <property type="project" value="UniProtKB"/>
</dbReference>
<dbReference type="GO" id="GO:0043565">
    <property type="term" value="F:sequence-specific DNA binding"/>
    <property type="evidence" value="ECO:0000250"/>
    <property type="project" value="UniProtKB"/>
</dbReference>
<dbReference type="GO" id="GO:1990837">
    <property type="term" value="F:sequence-specific double-stranded DNA binding"/>
    <property type="evidence" value="ECO:0000266"/>
    <property type="project" value="RGD"/>
</dbReference>
<dbReference type="GO" id="GO:0071479">
    <property type="term" value="P:cellular response to ionizing radiation"/>
    <property type="evidence" value="ECO:0000266"/>
    <property type="project" value="RGD"/>
</dbReference>
<dbReference type="GO" id="GO:0032922">
    <property type="term" value="P:circadian regulation of gene expression"/>
    <property type="evidence" value="ECO:0000250"/>
    <property type="project" value="UniProtKB"/>
</dbReference>
<dbReference type="GO" id="GO:0007623">
    <property type="term" value="P:circadian rhythm"/>
    <property type="evidence" value="ECO:0000270"/>
    <property type="project" value="RGD"/>
</dbReference>
<dbReference type="GO" id="GO:0000077">
    <property type="term" value="P:DNA damage checkpoint signaling"/>
    <property type="evidence" value="ECO:0000266"/>
    <property type="project" value="RGD"/>
</dbReference>
<dbReference type="GO" id="GO:0009649">
    <property type="term" value="P:entrainment of circadian clock"/>
    <property type="evidence" value="ECO:0000270"/>
    <property type="project" value="RGD"/>
</dbReference>
<dbReference type="GO" id="GO:0007565">
    <property type="term" value="P:female pregnancy"/>
    <property type="evidence" value="ECO:0000270"/>
    <property type="project" value="RGD"/>
</dbReference>
<dbReference type="GO" id="GO:0045892">
    <property type="term" value="P:negative regulation of DNA-templated transcription"/>
    <property type="evidence" value="ECO:0000250"/>
    <property type="project" value="UniProtKB"/>
</dbReference>
<dbReference type="GO" id="GO:2000323">
    <property type="term" value="P:negative regulation of nuclear receptor-mediated glucocorticoid signaling pathway"/>
    <property type="evidence" value="ECO:0000250"/>
    <property type="project" value="UniProtKB"/>
</dbReference>
<dbReference type="GO" id="GO:0042753">
    <property type="term" value="P:positive regulation of circadian rhythm"/>
    <property type="evidence" value="ECO:0000266"/>
    <property type="project" value="RGD"/>
</dbReference>
<dbReference type="GO" id="GO:0045893">
    <property type="term" value="P:positive regulation of DNA-templated transcription"/>
    <property type="evidence" value="ECO:0000314"/>
    <property type="project" value="UniProtKB"/>
</dbReference>
<dbReference type="GO" id="GO:0050729">
    <property type="term" value="P:positive regulation of inflammatory response"/>
    <property type="evidence" value="ECO:0000266"/>
    <property type="project" value="RGD"/>
</dbReference>
<dbReference type="GO" id="GO:0051092">
    <property type="term" value="P:positive regulation of NF-kappaB transcription factor activity"/>
    <property type="evidence" value="ECO:0000250"/>
    <property type="project" value="UniProtKB"/>
</dbReference>
<dbReference type="GO" id="GO:0045944">
    <property type="term" value="P:positive regulation of transcription by RNA polymerase II"/>
    <property type="evidence" value="ECO:0000266"/>
    <property type="project" value="RGD"/>
</dbReference>
<dbReference type="GO" id="GO:0043161">
    <property type="term" value="P:proteasome-mediated ubiquitin-dependent protein catabolic process"/>
    <property type="evidence" value="ECO:0000250"/>
    <property type="project" value="UniProtKB"/>
</dbReference>
<dbReference type="GO" id="GO:0006473">
    <property type="term" value="P:protein acetylation"/>
    <property type="evidence" value="ECO:0000250"/>
    <property type="project" value="UniProtKB"/>
</dbReference>
<dbReference type="GO" id="GO:0042752">
    <property type="term" value="P:regulation of circadian rhythm"/>
    <property type="evidence" value="ECO:0000250"/>
    <property type="project" value="UniProtKB"/>
</dbReference>
<dbReference type="GO" id="GO:0006355">
    <property type="term" value="P:regulation of DNA-templated transcription"/>
    <property type="evidence" value="ECO:0000250"/>
    <property type="project" value="UniProtKB"/>
</dbReference>
<dbReference type="GO" id="GO:0042634">
    <property type="term" value="P:regulation of hair cycle"/>
    <property type="evidence" value="ECO:0000250"/>
    <property type="project" value="UniProtKB"/>
</dbReference>
<dbReference type="GO" id="GO:0050796">
    <property type="term" value="P:regulation of insulin secretion"/>
    <property type="evidence" value="ECO:0000250"/>
    <property type="project" value="UniProtKB"/>
</dbReference>
<dbReference type="GO" id="GO:0006357">
    <property type="term" value="P:regulation of transcription by RNA polymerase II"/>
    <property type="evidence" value="ECO:0000318"/>
    <property type="project" value="GO_Central"/>
</dbReference>
<dbReference type="GO" id="GO:2000074">
    <property type="term" value="P:regulation of type B pancreatic cell development"/>
    <property type="evidence" value="ECO:0000250"/>
    <property type="project" value="UniProtKB"/>
</dbReference>
<dbReference type="GO" id="GO:0009416">
    <property type="term" value="P:response to light stimulus"/>
    <property type="evidence" value="ECO:0000270"/>
    <property type="project" value="RGD"/>
</dbReference>
<dbReference type="GO" id="GO:0051775">
    <property type="term" value="P:response to redox state"/>
    <property type="evidence" value="ECO:0000250"/>
    <property type="project" value="UniProtKB"/>
</dbReference>
<dbReference type="GO" id="GO:0007283">
    <property type="term" value="P:spermatogenesis"/>
    <property type="evidence" value="ECO:0000250"/>
    <property type="project" value="UniProtKB"/>
</dbReference>
<dbReference type="CDD" id="cd19734">
    <property type="entry name" value="bHLH-PAS_CLOCK"/>
    <property type="match status" value="1"/>
</dbReference>
<dbReference type="CDD" id="cd00130">
    <property type="entry name" value="PAS"/>
    <property type="match status" value="2"/>
</dbReference>
<dbReference type="FunFam" id="3.30.450.20:FF:000016">
    <property type="entry name" value="Circadian locomoter output cycles protein"/>
    <property type="match status" value="1"/>
</dbReference>
<dbReference type="FunFam" id="4.10.280.10:FF:000013">
    <property type="entry name" value="Circadian locomoter output cycles protein kaput"/>
    <property type="match status" value="1"/>
</dbReference>
<dbReference type="FunFam" id="3.30.450.20:FF:000022">
    <property type="entry name" value="circadian locomoter output cycles protein kaput"/>
    <property type="match status" value="1"/>
</dbReference>
<dbReference type="Gene3D" id="4.10.280.10">
    <property type="entry name" value="Helix-loop-helix DNA-binding domain"/>
    <property type="match status" value="1"/>
</dbReference>
<dbReference type="Gene3D" id="3.30.450.20">
    <property type="entry name" value="PAS domain"/>
    <property type="match status" value="2"/>
</dbReference>
<dbReference type="InterPro" id="IPR011598">
    <property type="entry name" value="bHLH_dom"/>
</dbReference>
<dbReference type="InterPro" id="IPR047230">
    <property type="entry name" value="CLOCK-like"/>
</dbReference>
<dbReference type="InterPro" id="IPR036638">
    <property type="entry name" value="HLH_DNA-bd_sf"/>
</dbReference>
<dbReference type="InterPro" id="IPR001067">
    <property type="entry name" value="Nuc_translocat"/>
</dbReference>
<dbReference type="InterPro" id="IPR001610">
    <property type="entry name" value="PAC"/>
</dbReference>
<dbReference type="InterPro" id="IPR000014">
    <property type="entry name" value="PAS"/>
</dbReference>
<dbReference type="InterPro" id="IPR035965">
    <property type="entry name" value="PAS-like_dom_sf"/>
</dbReference>
<dbReference type="InterPro" id="IPR013767">
    <property type="entry name" value="PAS_fold"/>
</dbReference>
<dbReference type="PANTHER" id="PTHR46055">
    <property type="entry name" value="CIRCADIAN LOCOMOTER OUTPUT CYCLES PROTEIN KAPUT"/>
    <property type="match status" value="1"/>
</dbReference>
<dbReference type="PANTHER" id="PTHR46055:SF2">
    <property type="entry name" value="CIRCADIAN LOCOMOTER OUTPUT CYCLES PROTEIN KAPUT"/>
    <property type="match status" value="1"/>
</dbReference>
<dbReference type="Pfam" id="PF00010">
    <property type="entry name" value="HLH"/>
    <property type="match status" value="1"/>
</dbReference>
<dbReference type="Pfam" id="PF00989">
    <property type="entry name" value="PAS"/>
    <property type="match status" value="1"/>
</dbReference>
<dbReference type="Pfam" id="PF14598">
    <property type="entry name" value="PAS_11"/>
    <property type="match status" value="1"/>
</dbReference>
<dbReference type="PRINTS" id="PR00785">
    <property type="entry name" value="NCTRNSLOCATR"/>
</dbReference>
<dbReference type="SMART" id="SM00353">
    <property type="entry name" value="HLH"/>
    <property type="match status" value="1"/>
</dbReference>
<dbReference type="SMART" id="SM00086">
    <property type="entry name" value="PAC"/>
    <property type="match status" value="1"/>
</dbReference>
<dbReference type="SMART" id="SM00091">
    <property type="entry name" value="PAS"/>
    <property type="match status" value="2"/>
</dbReference>
<dbReference type="SUPFAM" id="SSF47459">
    <property type="entry name" value="HLH, helix-loop-helix DNA-binding domain"/>
    <property type="match status" value="1"/>
</dbReference>
<dbReference type="SUPFAM" id="SSF55785">
    <property type="entry name" value="PYP-like sensor domain (PAS domain)"/>
    <property type="match status" value="2"/>
</dbReference>
<dbReference type="PROSITE" id="PS50888">
    <property type="entry name" value="BHLH"/>
    <property type="match status" value="1"/>
</dbReference>
<dbReference type="PROSITE" id="PS50112">
    <property type="entry name" value="PAS"/>
    <property type="match status" value="2"/>
</dbReference>
<feature type="chain" id="PRO_0000262638" description="Circadian locomoter output cycles protein kaput">
    <location>
        <begin position="1"/>
        <end position="862"/>
    </location>
</feature>
<feature type="domain" description="bHLH" evidence="5">
    <location>
        <begin position="34"/>
        <end position="84"/>
    </location>
</feature>
<feature type="domain" description="PAS 1" evidence="4">
    <location>
        <begin position="107"/>
        <end position="177"/>
    </location>
</feature>
<feature type="domain" description="PAS 2" evidence="4">
    <location>
        <begin position="262"/>
        <end position="332"/>
    </location>
</feature>
<feature type="domain" description="PAC">
    <location>
        <begin position="336"/>
        <end position="379"/>
    </location>
</feature>
<feature type="region of interest" description="Interaction with NR3C1" evidence="2">
    <location>
        <begin position="371"/>
        <end position="861"/>
    </location>
</feature>
<feature type="region of interest" description="Disordered" evidence="6">
    <location>
        <begin position="388"/>
        <end position="497"/>
    </location>
</feature>
<feature type="region of interest" description="Interaction with SIRT1" evidence="2">
    <location>
        <begin position="450"/>
        <end position="570"/>
    </location>
</feature>
<feature type="region of interest" description="Implicated in the circadian rhythmicity" evidence="1">
    <location>
        <begin position="514"/>
        <end position="564"/>
    </location>
</feature>
<feature type="region of interest" description="Disordered" evidence="6">
    <location>
        <begin position="623"/>
        <end position="652"/>
    </location>
</feature>
<feature type="region of interest" description="Disordered" evidence="6">
    <location>
        <begin position="768"/>
        <end position="802"/>
    </location>
</feature>
<feature type="region of interest" description="Disordered" evidence="6">
    <location>
        <begin position="822"/>
        <end position="862"/>
    </location>
</feature>
<feature type="short sequence motif" description="Nuclear localization signal" evidence="2">
    <location>
        <begin position="32"/>
        <end position="47"/>
    </location>
</feature>
<feature type="compositionally biased region" description="Polar residues" evidence="6">
    <location>
        <begin position="405"/>
        <end position="416"/>
    </location>
</feature>
<feature type="compositionally biased region" description="Polar residues" evidence="6">
    <location>
        <begin position="447"/>
        <end position="461"/>
    </location>
</feature>
<feature type="compositionally biased region" description="Low complexity" evidence="6">
    <location>
        <begin position="478"/>
        <end position="493"/>
    </location>
</feature>
<feature type="compositionally biased region" description="Low complexity" evidence="6">
    <location>
        <begin position="623"/>
        <end position="637"/>
    </location>
</feature>
<feature type="compositionally biased region" description="Polar residues" evidence="6">
    <location>
        <begin position="638"/>
        <end position="652"/>
    </location>
</feature>
<feature type="compositionally biased region" description="Polar residues" evidence="6">
    <location>
        <begin position="853"/>
        <end position="862"/>
    </location>
</feature>
<feature type="site" description="Interaction with E-box DNA" evidence="3">
    <location>
        <position position="39"/>
    </location>
</feature>
<feature type="site" description="Interaction with E-box DNA" evidence="3">
    <location>
        <position position="43"/>
    </location>
</feature>
<feature type="site" description="Interaction with E-box DNA" evidence="3">
    <location>
        <position position="47"/>
    </location>
</feature>
<feature type="site" description="Important for interaction with BMAL1" evidence="3">
    <location>
        <position position="84"/>
    </location>
</feature>
<feature type="modified residue" description="Phosphoserine" evidence="2">
    <location>
        <position position="38"/>
    </location>
</feature>
<feature type="modified residue" description="Phosphoserine" evidence="2">
    <location>
        <position position="42"/>
    </location>
</feature>
<feature type="modified residue" description="Phosphoserine" evidence="2">
    <location>
        <position position="408"/>
    </location>
</feature>
<feature type="modified residue" description="Phosphoserine; by GSK3-beta" evidence="2">
    <location>
        <position position="427"/>
    </location>
</feature>
<feature type="modified residue" description="Phosphoserine" evidence="2">
    <location>
        <position position="431"/>
    </location>
</feature>
<feature type="modified residue" description="Phosphothreonine; by CDK5" evidence="3">
    <location>
        <position position="451"/>
    </location>
</feature>
<feature type="modified residue" description="Phosphothreonine; by CDK5" evidence="3">
    <location>
        <position position="461"/>
    </location>
</feature>
<feature type="cross-link" description="Glycyl lysine isopeptide (Lys-Gly) (interchain with G-Cter in SUMO1)" evidence="2">
    <location>
        <position position="67"/>
    </location>
</feature>
<feature type="cross-link" description="Glycyl lysine isopeptide (Lys-Gly) (interchain with G-Cter in SUMO1)" evidence="2">
    <location>
        <position position="858"/>
    </location>
</feature>
<feature type="splice variant" id="VSP_021795" description="In isoform 2." evidence="8">
    <location>
        <begin position="484"/>
        <end position="513"/>
    </location>
</feature>
<protein>
    <recommendedName>
        <fullName>Circadian locomoter output cycles protein kaput</fullName>
        <shortName>rCLOCK</shortName>
        <ecNumber>2.3.1.48</ecNumber>
    </recommendedName>
</protein>
<sequence>MLFTVSCSKMSSIVDRDDSSIFDGLVEEDDKDKAKRVSRNKSEKKRRDQFNVLIKELGSMLPGNARKMDKSTVLQKSIDFLRKHKEITAQSDASEIRQDWKPTFLSNEEFTQLMLEALDGFFLAIMTDGSIIYVSETVTSLLEHLPSDLVDQSIFNFIPEGEHSEVYKILSTHLLESDSLTPEDLKSKNQLEFCCHMLRGTIDPKEPSTYEYVRFIGNFKSLNSVSTSTHNGFEGTIQRTHRPSYEDRVCFVATVRLATPQFIKEMCTVEEPNEEFTSRHSLEWKFLFLDHRAPPIIGYLPFEVLGTSGYDYYHVDDLESLAKCHEHLMQYGKGKSCYYRFLTKGQQWIWLQTHYYITYHQWNSRPEFIVCTHTVVSYAEVRAERRRELGVEESLPETAADKSQDSGSDNRINTVSLKEALERFDHSPTPSASSRSSRKSSHTAVSDPSSTPTKIPTDTSTPPRPHLPAHEKMTQRRSSFSSQSINSQSVGSSLTQPAMSQAANLPIPQGMSQFQLSAQLGAMQHLKDQLEQRTRMIEANIHRQQEELRKIQEQLQMVHGQGLQMFLQQSNPGLNLGSVQLSSGNSNIQQLTPINMQGQVVPVNQIQSGVNAGHVSTGQHMIQQQTLQSTSTQSQQSVMSGHSQPTSLPNQTPSTLTAPLYNTMVISQPAAGSMVPIPSSMPQNSTQSATVTTFTQDRQIRFSQGQQLVTKLVTAPVACGAVMVPSTMLMGQVVTAYPTFATQQQQAQALSVTQQQQQQQQQQQQQQQQQPQQAQQPQSQQSSQDQPHPSVQQPAQLTQPPQQFLQTSRLLHGNPSTQLILSAAFPLQQSTFPPSHHQQHQQQQLHRHRTDSLTDPSKVQPQ</sequence>
<reference key="1">
    <citation type="journal article" date="1999" name="Brain Res. Mol. Brain Res.">
        <title>Phase-dependent induction by light of rat Clock gene expression in the suprachiasmatic nucleus.</title>
        <authorList>
            <person name="Abe H."/>
            <person name="Honma S."/>
            <person name="Namihira M."/>
            <person name="Tanahashi Y."/>
            <person name="Ikeda M."/>
            <person name="Yu W."/>
            <person name="Honma K."/>
        </authorList>
    </citation>
    <scope>NUCLEOTIDE SEQUENCE [MRNA] (ISOFORMS 1 AND 2)</scope>
    <scope>TISSUE SPECIFICITY</scope>
    <scope>INDUCTION</scope>
    <source>
        <tissue>Brain</tissue>
    </source>
</reference>